<sequence length="374" mass="41638">MPGAVEGPRWKQAEDIRDIYDFRDVLGTGAFSEVILAEDKRTQKLVAIKCIAKKALEGKEGSMENEIAVLHKIKHPNIVALDDIYESGGHLYLIMQLVSGGELFDRIVEKGFYTERDASRLIFQVLDAVKYLHDLGIVHRDLKPENLLYYSLDEDSKIMISDFGLSKMEDPGSVLSTACGTPGYVAPEVLAQKPYSKAVDCWSIGVIAYILLCGYPPFYDENDAKLFEQILKAEYEFDSPYWDDISDSAKDFIRHLMEKDPEKRFTCEQALQHPWIAGDTALDKNIHQSVSEQIKKNFAKSKWKQAFNATAVVRHMRKLQLGTSQEGQGQTASHGELLTPTAGGPAAGCCCRDCCVEPGSELPPAPPPSSRAMD</sequence>
<organism>
    <name type="scientific">Rattus norvegicus</name>
    <name type="common">Rat</name>
    <dbReference type="NCBI Taxonomy" id="10116"/>
    <lineage>
        <taxon>Eukaryota</taxon>
        <taxon>Metazoa</taxon>
        <taxon>Chordata</taxon>
        <taxon>Craniata</taxon>
        <taxon>Vertebrata</taxon>
        <taxon>Euteleostomi</taxon>
        <taxon>Mammalia</taxon>
        <taxon>Eutheria</taxon>
        <taxon>Euarchontoglires</taxon>
        <taxon>Glires</taxon>
        <taxon>Rodentia</taxon>
        <taxon>Myomorpha</taxon>
        <taxon>Muroidea</taxon>
        <taxon>Muridae</taxon>
        <taxon>Murinae</taxon>
        <taxon>Rattus</taxon>
    </lineage>
</organism>
<keyword id="KW-0002">3D-structure</keyword>
<keyword id="KW-0021">Allosteric enzyme</keyword>
<keyword id="KW-0067">ATP-binding</keyword>
<keyword id="KW-0112">Calmodulin-binding</keyword>
<keyword id="KW-0131">Cell cycle</keyword>
<keyword id="KW-0963">Cytoplasm</keyword>
<keyword id="KW-0217">Developmental protein</keyword>
<keyword id="KW-0221">Differentiation</keyword>
<keyword id="KW-0903">Direct protein sequencing</keyword>
<keyword id="KW-1017">Isopeptide bond</keyword>
<keyword id="KW-0418">Kinase</keyword>
<keyword id="KW-0524">Neurogenesis</keyword>
<keyword id="KW-0547">Nucleotide-binding</keyword>
<keyword id="KW-0539">Nucleus</keyword>
<keyword id="KW-0597">Phosphoprotein</keyword>
<keyword id="KW-1185">Reference proteome</keyword>
<keyword id="KW-0723">Serine/threonine-protein kinase</keyword>
<keyword id="KW-0808">Transferase</keyword>
<keyword id="KW-0832">Ubl conjugation</keyword>
<comment type="function">
    <text evidence="1 4 6 8 9 10 11 12 15">Calcium/calmodulin-dependent protein kinase that operates in the calcium-triggered CaMKK-CaMK1 signaling cascade and, upon calcium influx, regulates transcription activators activity, cell cycle, hormone production, cell differentiation, actin filament organization and neurite outgrowth. Recognizes the substrate consensus sequence [MVLIF]-x-R-x(2)-[ST]-x(3)-[MVLIF]. Regulates axonal extension and growth cone motility in hippocampal and cerebellar nerve cells. Upon NMDA receptor-mediated Ca(2+) elevation, promotes dendritic growth in hippocampal neurons and is essential in synapses for full long-term potentiation (LTP) and ERK2-dependent translational activation. Downstream of NMDA receptors, promotes the formation of spines and synapses in hippocampal neurons by phosphorylating ARHGEF7/BETAPIX on 'Ser-516', which results in the enhancement of ARHGEF7 activity and activation of RAC1. Promotes neuronal differentiation and neurite outgrowth by activation and phosphorylation of MARK2 on 'Ser-91', 'Ser-92', 'Ser-93' and 'Ser-294'. Promotes nuclear export of HDAC5 and binding to 14-3-3 by phosphorylation of 'Ser-259' and 'Ser-498' in the regulation of muscle cell differentiation (By similarity). Regulates NUMB-mediated endocytosis by phosphorylation of NUMB on 'Ser-275' and 'Ser-294'. Involved in the regulation of basal and estrogen-stimulated migration of medulloblastoma cells through ARHGEF7/BETAPIX phosphorylation (By similarity). Is required for proper activation of cyclin-D1/CDK4 complex during G1 progression in diploid fibroblasts. Plays a role in K(+) and ANG2-mediated regulation of the aldosterone synthase (CYP11B2) to produce aldosterone in the adrenal cortex. Phosphorylates EIF4G3/eIF4GII. In vitro phosphorylates CREB1, ATF1, CFTR, MYL9 and SYN1/synapsin I.</text>
</comment>
<comment type="catalytic activity">
    <reaction evidence="16 17">
        <text>L-seryl-[protein] + ATP = O-phospho-L-seryl-[protein] + ADP + H(+)</text>
        <dbReference type="Rhea" id="RHEA:17989"/>
        <dbReference type="Rhea" id="RHEA-COMP:9863"/>
        <dbReference type="Rhea" id="RHEA-COMP:11604"/>
        <dbReference type="ChEBI" id="CHEBI:15378"/>
        <dbReference type="ChEBI" id="CHEBI:29999"/>
        <dbReference type="ChEBI" id="CHEBI:30616"/>
        <dbReference type="ChEBI" id="CHEBI:83421"/>
        <dbReference type="ChEBI" id="CHEBI:456216"/>
        <dbReference type="EC" id="2.7.11.17"/>
    </reaction>
</comment>
<comment type="catalytic activity">
    <reaction evidence="16 17">
        <text>L-threonyl-[protein] + ATP = O-phospho-L-threonyl-[protein] + ADP + H(+)</text>
        <dbReference type="Rhea" id="RHEA:46608"/>
        <dbReference type="Rhea" id="RHEA-COMP:11060"/>
        <dbReference type="Rhea" id="RHEA-COMP:11605"/>
        <dbReference type="ChEBI" id="CHEBI:15378"/>
        <dbReference type="ChEBI" id="CHEBI:30013"/>
        <dbReference type="ChEBI" id="CHEBI:30616"/>
        <dbReference type="ChEBI" id="CHEBI:61977"/>
        <dbReference type="ChEBI" id="CHEBI:456216"/>
        <dbReference type="EC" id="2.7.11.17"/>
    </reaction>
</comment>
<comment type="activity regulation">
    <text evidence="16 17">Activated by Ca(2+)/calmodulin. Binding of calmodulin results in conformational change that relieves intrasteric autoinhibition and allows phosphorylation of Thr-177 within the activation loop by CaMKK1 or CaMKK2. Phosphorylation of Thr-177 results in several fold increase in total activity. Unlike CaMK4, is unable to exhibit autonomous activity after Ca(2+)/calmodulin activation.</text>
</comment>
<comment type="subunit">
    <text evidence="5 7">Monomer. Interacts with XPO1.</text>
</comment>
<comment type="subcellular location">
    <subcellularLocation>
        <location>Cytoplasm</location>
    </subcellularLocation>
    <subcellularLocation>
        <location>Nucleus</location>
    </subcellularLocation>
    <text>Predominantly cytoplasmic.</text>
</comment>
<comment type="tissue specificity">
    <text evidence="13">Widely expressed.</text>
</comment>
<comment type="domain">
    <text evidence="5">The autoinhibitory domain overlaps with the calmodulin binding region and interacts in the inactive folded state with the catalytic domain as a pseudosubstrate.</text>
</comment>
<comment type="PTM">
    <text evidence="16">Phosphorylated by CaMKK1 and CaMKK2 on Thr-177.</text>
</comment>
<comment type="PTM">
    <text evidence="1">Polybiquitinated by the E3 ubiquitin-protein ligase complex SCF(FBXL12), leading to proteasomal degradation.</text>
</comment>
<comment type="miscellaneous">
    <text>Dendrite development is blocked in hippocampal neurons silencing CAKM1.</text>
</comment>
<comment type="similarity">
    <text evidence="18">Belongs to the protein kinase superfamily. CAMK Ser/Thr protein kinase family. CaMK subfamily.</text>
</comment>
<comment type="sequence caution" evidence="18">
    <conflict type="frameshift">
        <sequence resource="EMBL-CDS" id="AAA19670"/>
    </conflict>
</comment>
<protein>
    <recommendedName>
        <fullName>Calcium/calmodulin-dependent protein kinase type 1</fullName>
        <ecNumber evidence="16 17">2.7.11.17</ecNumber>
    </recommendedName>
    <alternativeName>
        <fullName>CaM kinase I</fullName>
        <shortName>CaM-KI</shortName>
    </alternativeName>
    <alternativeName>
        <fullName>CaM kinase I alpha</fullName>
        <shortName>CaMKI-alpha</shortName>
    </alternativeName>
</protein>
<gene>
    <name type="primary">Camk1</name>
</gene>
<reference key="1">
    <citation type="journal article" date="1993" name="J. Biol. Chem.">
        <title>Calcium/calmodulin-dependent protein kinase I. cDNA cloning and identification of autophosphorylation site.</title>
        <authorList>
            <person name="Picciotto M.R."/>
            <person name="Czernik A.J."/>
            <person name="Nairn A.C."/>
        </authorList>
    </citation>
    <scope>NUCLEOTIDE SEQUENCE [MRNA]</scope>
</reference>
<reference key="2">
    <citation type="journal article" date="1995" name="J. Biol. Chem.">
        <authorList>
            <person name="Picciotto M.R."/>
            <person name="Czernik A.J."/>
            <person name="Nairn A.C."/>
        </authorList>
    </citation>
    <scope>ERRATUM OF PUBMED:8253780</scope>
</reference>
<reference key="3">
    <citation type="journal article" date="1994" name="Biochim. Biophys. Acta">
        <title>Characterization of a rat cDNA clone encoding calcium/calmodulin-dependent protein kinase I.</title>
        <authorList>
            <person name="Cho F.S."/>
            <person name="Phillips K.S."/>
            <person name="Bogucki B."/>
            <person name="Weaver T.E."/>
        </authorList>
    </citation>
    <scope>NUCLEOTIDE SEQUENCE [MRNA]</scope>
    <source>
        <strain>Sprague-Dawley</strain>
        <tissue>Lung</tissue>
    </source>
</reference>
<reference key="4">
    <citation type="journal article" date="2004" name="Genome Res.">
        <title>The status, quality, and expansion of the NIH full-length cDNA project: the Mammalian Gene Collection (MGC).</title>
        <authorList>
            <consortium name="The MGC Project Team"/>
        </authorList>
    </citation>
    <scope>NUCLEOTIDE SEQUENCE [LARGE SCALE MRNA]</scope>
    <source>
        <tissue>Lung</tissue>
    </source>
</reference>
<reference key="5">
    <citation type="journal article" date="1993" name="J. Biol. Chem.">
        <title>Purification and characterization of Ca2+/calmodulin-dependent protein kinase V from rat cerebrum.</title>
        <authorList>
            <person name="Mochizuki H."/>
            <person name="Ito T."/>
            <person name="Hidaka H."/>
        </authorList>
    </citation>
    <scope>PROTEIN SEQUENCE OF 12-37; 158-167; 233-241 AND 285-295</scope>
</reference>
<reference key="6">
    <citation type="journal article" date="1991" name="Science">
        <title>CREB: a Ca(2+)-regulated transcription factor phosphorylated by calmodulin-dependent kinases.</title>
        <authorList>
            <person name="Sheng M."/>
            <person name="Thompson M.A."/>
            <person name="Greenberg M.E."/>
        </authorList>
    </citation>
    <scope>FUNCTION IN PHOSPHORYLATION OF CREB1</scope>
</reference>
<reference key="7">
    <citation type="journal article" date="1995" name="FEBS Lett.">
        <title>Similar substrate recognition motifs for mammalian AMP-activated protein kinase, higher plant HMG-CoA reductase kinase-A, yeast SNF1, and mammalian calmodulin-dependent protein kinase I.</title>
        <authorList>
            <person name="Dale S."/>
            <person name="Wilson W.A."/>
            <person name="Edelman A.M."/>
            <person name="Hardie D.G."/>
        </authorList>
    </citation>
    <scope>SUBSTRATE RECOGNITION MOTIF</scope>
</reference>
<reference key="8">
    <citation type="journal article" date="1995" name="Synapse">
        <title>Immunochemical localization of calcium/calmodulin-dependent protein kinase I.</title>
        <authorList>
            <person name="Picciotto M.R."/>
            <person name="Zoli M."/>
            <person name="Bertuzzi G."/>
            <person name="Nairn A.C."/>
        </authorList>
    </citation>
    <scope>TISSUE SPECIFICITY</scope>
    <scope>SUBCELLULAR LOCATION</scope>
</reference>
<reference key="9">
    <citation type="journal article" date="1996" name="J. Biol. Chem.">
        <title>Regulation of activating transcription factor-1 and the cAMP response element-binding protein by Ca2+/calmodulin-dependent protein kinases type I, II, and IV.</title>
        <authorList>
            <person name="Sun P."/>
            <person name="Lou L."/>
            <person name="Maurer R.A."/>
        </authorList>
    </citation>
    <scope>FUNCTION IN PHOSPHORYLATION OF ATF1 AND CREB1</scope>
</reference>
<reference key="10">
    <citation type="journal article" date="1996" name="J. Biol. Chem.">
        <title>Multiple Ca(2+)-calmodulin-dependent protein kinase kinases from rat brain. Purification, regulation by Ca(2+)-calmodulin, and partial amino acid sequence.</title>
        <authorList>
            <person name="Edelman A.M."/>
            <person name="Mitchelhill K.I."/>
            <person name="Selbert M.A."/>
            <person name="Anderson K.A."/>
            <person name="Hook S.S."/>
            <person name="Stapleton D."/>
            <person name="Goldstein E.G."/>
            <person name="Means A.R."/>
            <person name="Kemp B.E."/>
        </authorList>
    </citation>
    <scope>CATALYTIC ACTIVITY</scope>
    <scope>ACTIVITY REGULATION</scope>
    <scope>PHOSPHORYLATION AT THR-177 BY CAMKK1 AND CAMKK2</scope>
    <scope>MUTAGENESIS OF THR-177</scope>
</reference>
<reference key="11">
    <citation type="journal article" date="1996" name="J. Biol. Chem.">
        <title>Activation of a calcium-calmodulin-dependent protein kinase I cascade in PC12 cells.</title>
        <authorList>
            <person name="Aletta J.M."/>
            <person name="Selbert M.A."/>
            <person name="Nairn A.C."/>
            <person name="Edelman A.M."/>
        </authorList>
    </citation>
    <scope>CATALYTIC ACTIVITY</scope>
    <scope>ACTIVITY REGULATION</scope>
</reference>
<reference key="12">
    <citation type="journal article" date="2000" name="Neurosci. Lett.">
        <title>Expression and subcellular localization of multifunctional calmodulin-dependent protein kinases-I, -II and -IV are altered in rat hippocampal CA1 neurons after induction of long-term potentiation.</title>
        <authorList>
            <person name="Ahmed B.Y."/>
            <person name="Yamaguchi F."/>
            <person name="Tsumura T."/>
            <person name="Gotoh T."/>
            <person name="Sugimoto K."/>
            <person name="Tai Y."/>
            <person name="Konishi R."/>
            <person name="Kobayashi R."/>
            <person name="Tokuda M."/>
        </authorList>
    </citation>
    <scope>SUBCELLULAR LOCATION</scope>
</reference>
<reference key="13">
    <citation type="journal article" date="2002" name="Biochem. J.">
        <title>Characterization of Ca2+/calmodulin-dependent protein kinase I as a myosin II regulatory light chain kinase in vitro and in vivo.</title>
        <authorList>
            <person name="Suizu F."/>
            <person name="Fukuta Y."/>
            <person name="Ueda K."/>
            <person name="Iwasaki T."/>
            <person name="Tokumitsu H."/>
            <person name="Hosoya H."/>
        </authorList>
    </citation>
    <scope>SUBCELLULAR LOCATION</scope>
    <scope>FUNCTION IN PHOSPHORYLATION OF MYL9</scope>
</reference>
<reference key="14">
    <citation type="journal article" date="2004" name="FEBS Lett.">
        <title>Cytoplasmic localization of calcium/calmodulin-dependent protein kinase I-alpha depends on a nuclear export signal in its regulatory domain.</title>
        <authorList>
            <person name="Stedman D.R."/>
            <person name="Uboha N.V."/>
            <person name="Stedman T.T."/>
            <person name="Nairn A.C."/>
            <person name="Picciotto M.R."/>
        </authorList>
    </citation>
    <scope>SUBCELLULAR LOCATION</scope>
    <scope>NUCLEAR EXPORT SIGNAL</scope>
    <scope>MUTAGENESIS OF 319-LEU--LEU-321 AND 263-LYS-ARG-264</scope>
    <scope>INTERACTION WITH XPO1</scope>
</reference>
<reference key="15">
    <citation type="journal article" date="2004" name="J. Neurosci.">
        <title>Regulation of axonal extension and growth cone motility by calmodulin-dependent protein kinase I.</title>
        <authorList>
            <person name="Wayman G.A."/>
            <person name="Kaech S."/>
            <person name="Grant W.F."/>
            <person name="Davare M."/>
            <person name="Impey S."/>
            <person name="Tokumitsu H."/>
            <person name="Nozaki N."/>
            <person name="Banker G."/>
            <person name="Soderling T.R."/>
        </authorList>
    </citation>
    <scope>FUNCTION IN AXONAL OUTGROWTH</scope>
</reference>
<reference key="16">
    <citation type="journal article" date="2005" name="J. Neurosci.">
        <title>Calmodulin-dependent kinase kinase/calmodulin kinase I activity gates extracellular-regulated kinase-dependent long-term potentiation.</title>
        <authorList>
            <person name="Schmitt J.M."/>
            <person name="Guire E.S."/>
            <person name="Saneyoshi T."/>
            <person name="Soderling T.R."/>
        </authorList>
    </citation>
    <scope>FUNCTION IN LONG-TERM POTENTIATION</scope>
</reference>
<reference key="17">
    <citation type="journal article" date="2006" name="FEBS Lett.">
        <title>Phosphorylation of Numb regulates its interaction with the clathrin-associated adaptor AP-2.</title>
        <authorList>
            <person name="Tokumitsu H."/>
            <person name="Hatano N."/>
            <person name="Yokokura S."/>
            <person name="Sueyoshi Y."/>
            <person name="Nozaki N."/>
            <person name="Kobayashi R."/>
        </authorList>
    </citation>
    <scope>FUNCTION IN PHOSPHORYLATION OF NUMB</scope>
</reference>
<reference key="18">
    <citation type="journal article" date="2006" name="Neuron">
        <title>Activity-dependent dendritic arborization mediated by CaM-kinase I activation and enhanced CREB-dependent transcription of Wnt-2.</title>
        <authorList>
            <person name="Wayman G.A."/>
            <person name="Impey S."/>
            <person name="Marks D."/>
            <person name="Saneyoshi T."/>
            <person name="Grant W.F."/>
            <person name="Derkach V."/>
            <person name="Soderling T.R."/>
        </authorList>
    </citation>
    <scope>FUNCTION IN DENDRITIC GROWTH</scope>
</reference>
<reference key="19">
    <citation type="journal article" date="2011" name="J. Neurooncol.">
        <title>Calmodulin-kinases regulate basal and estrogen stimulated medulloblastoma migration via Rac1.</title>
        <authorList>
            <person name="Davare M.A."/>
            <person name="Saneyoshi T."/>
            <person name="Soderling T.R."/>
        </authorList>
    </citation>
    <scope>FUNCTION IN MEDULLOBLASTOMA CELLS MIGRATION</scope>
</reference>
<reference key="20">
    <citation type="journal article" date="1996" name="Cell">
        <title>Structural basis for the autoinhibition of calcium/calmodulin-dependent protein kinase I.</title>
        <authorList>
            <person name="Goldberg J."/>
            <person name="Nairn A.C."/>
            <person name="Kuriyan J."/>
        </authorList>
    </citation>
    <scope>X-RAY CRYSTALLOGRAPHY (2.5 ANGSTROMS)</scope>
    <source>
        <tissue>Brain</tissue>
    </source>
</reference>
<reference key="21">
    <citation type="journal article" date="2002" name="Biochemistry">
        <title>Structure of the complex of calmodulin with the target sequence of calmodulin-dependent protein kinase I: studies of the kinase activation mechanism.</title>
        <authorList>
            <person name="Clapperton J.A."/>
            <person name="Martin S.R."/>
            <person name="Smerdon S.J."/>
            <person name="Gamblin S.J."/>
            <person name="Bayley P.M."/>
        </authorList>
    </citation>
    <scope>X-RAY CRYSTALLOGRAPHY (1.7 ANGSTROMS) OF 294-318 IN COMPLEX WITH CALMODULIN</scope>
    <scope>DOMAIN</scope>
</reference>
<dbReference type="EC" id="2.7.11.17" evidence="16 17"/>
<dbReference type="EMBL" id="L24907">
    <property type="protein sequence ID" value="AAA19670.1"/>
    <property type="status" value="ALT_FRAME"/>
    <property type="molecule type" value="mRNA"/>
</dbReference>
<dbReference type="EMBL" id="L26288">
    <property type="protein sequence ID" value="AAA66944.1"/>
    <property type="molecule type" value="mRNA"/>
</dbReference>
<dbReference type="EMBL" id="BC071177">
    <property type="protein sequence ID" value="AAH71177.1"/>
    <property type="molecule type" value="mRNA"/>
</dbReference>
<dbReference type="PIR" id="S50193">
    <property type="entry name" value="S50193"/>
</dbReference>
<dbReference type="RefSeq" id="NP_604463.1">
    <property type="nucleotide sequence ID" value="NM_134468.2"/>
</dbReference>
<dbReference type="RefSeq" id="XP_006237065.1">
    <property type="nucleotide sequence ID" value="XM_006237003.3"/>
</dbReference>
<dbReference type="PDB" id="1A06">
    <property type="method" value="X-ray"/>
    <property type="resolution" value="2.50 A"/>
    <property type="chains" value="A=1-329"/>
</dbReference>
<dbReference type="PDB" id="1MXE">
    <property type="method" value="X-ray"/>
    <property type="resolution" value="1.70 A"/>
    <property type="chains" value="E/F=294-318"/>
</dbReference>
<dbReference type="PDB" id="2L7L">
    <property type="method" value="NMR"/>
    <property type="chains" value="B=299-320"/>
</dbReference>
<dbReference type="PDBsum" id="1A06"/>
<dbReference type="PDBsum" id="1MXE"/>
<dbReference type="PDBsum" id="2L7L"/>
<dbReference type="BMRB" id="Q63450"/>
<dbReference type="SMR" id="Q63450"/>
<dbReference type="BioGRID" id="251279">
    <property type="interactions" value="4"/>
</dbReference>
<dbReference type="FunCoup" id="Q63450">
    <property type="interactions" value="1243"/>
</dbReference>
<dbReference type="IntAct" id="Q63450">
    <property type="interactions" value="5"/>
</dbReference>
<dbReference type="MINT" id="Q63450"/>
<dbReference type="STRING" id="10116.ENSRNOP00000033456"/>
<dbReference type="GlyGen" id="Q63450">
    <property type="glycosylation" value="1 site, 1 O-linked glycan (1 site)"/>
</dbReference>
<dbReference type="iPTMnet" id="Q63450"/>
<dbReference type="PhosphoSitePlus" id="Q63450"/>
<dbReference type="jPOST" id="Q63450"/>
<dbReference type="PaxDb" id="10116-ENSRNOP00000033456"/>
<dbReference type="GeneID" id="171503"/>
<dbReference type="KEGG" id="rno:171503"/>
<dbReference type="UCSC" id="RGD:629473">
    <property type="organism name" value="rat"/>
</dbReference>
<dbReference type="AGR" id="RGD:629473"/>
<dbReference type="CTD" id="8536"/>
<dbReference type="RGD" id="629473">
    <property type="gene designation" value="Camk1"/>
</dbReference>
<dbReference type="VEuPathDB" id="HostDB:ENSRNOG00000021781"/>
<dbReference type="eggNOG" id="KOG0032">
    <property type="taxonomic scope" value="Eukaryota"/>
</dbReference>
<dbReference type="HOGENOM" id="CLU_000288_63_0_1"/>
<dbReference type="InParanoid" id="Q63450"/>
<dbReference type="PhylomeDB" id="Q63450"/>
<dbReference type="BRENDA" id="2.7.11.17">
    <property type="organism ID" value="5301"/>
</dbReference>
<dbReference type="Reactome" id="R-RNO-9619229">
    <property type="pathway name" value="Activation of RAC1 downstream of NMDARs"/>
</dbReference>
<dbReference type="EvolutionaryTrace" id="Q63450"/>
<dbReference type="PRO" id="PR:Q63450"/>
<dbReference type="Proteomes" id="UP000002494">
    <property type="component" value="Chromosome 4"/>
</dbReference>
<dbReference type="Bgee" id="ENSRNOG00000021781">
    <property type="expression patterns" value="Expressed in frontal cortex and 19 other cell types or tissues"/>
</dbReference>
<dbReference type="GO" id="GO:0005737">
    <property type="term" value="C:cytoplasm"/>
    <property type="evidence" value="ECO:0000318"/>
    <property type="project" value="GO_Central"/>
</dbReference>
<dbReference type="GO" id="GO:0005829">
    <property type="term" value="C:cytosol"/>
    <property type="evidence" value="ECO:0000304"/>
    <property type="project" value="Reactome"/>
</dbReference>
<dbReference type="GO" id="GO:0098978">
    <property type="term" value="C:glutamatergic synapse"/>
    <property type="evidence" value="ECO:0000314"/>
    <property type="project" value="SynGO"/>
</dbReference>
<dbReference type="GO" id="GO:0005634">
    <property type="term" value="C:nucleus"/>
    <property type="evidence" value="ECO:0007669"/>
    <property type="project" value="UniProtKB-SubCell"/>
</dbReference>
<dbReference type="GO" id="GO:0014069">
    <property type="term" value="C:postsynaptic density"/>
    <property type="evidence" value="ECO:0000314"/>
    <property type="project" value="SynGO"/>
</dbReference>
<dbReference type="GO" id="GO:0005524">
    <property type="term" value="F:ATP binding"/>
    <property type="evidence" value="ECO:0007669"/>
    <property type="project" value="UniProtKB-KW"/>
</dbReference>
<dbReference type="GO" id="GO:0004683">
    <property type="term" value="F:calcium/calmodulin-dependent protein kinase activity"/>
    <property type="evidence" value="ECO:0000314"/>
    <property type="project" value="UniProtKB"/>
</dbReference>
<dbReference type="GO" id="GO:0005516">
    <property type="term" value="F:calmodulin binding"/>
    <property type="evidence" value="ECO:0000318"/>
    <property type="project" value="GO_Central"/>
</dbReference>
<dbReference type="GO" id="GO:0106310">
    <property type="term" value="F:protein serine kinase activity"/>
    <property type="evidence" value="ECO:0007669"/>
    <property type="project" value="RHEA"/>
</dbReference>
<dbReference type="GO" id="GO:0030154">
    <property type="term" value="P:cell differentiation"/>
    <property type="evidence" value="ECO:0007669"/>
    <property type="project" value="UniProtKB-KW"/>
</dbReference>
<dbReference type="GO" id="GO:0035556">
    <property type="term" value="P:intracellular signal transduction"/>
    <property type="evidence" value="ECO:0000266"/>
    <property type="project" value="RGD"/>
</dbReference>
<dbReference type="GO" id="GO:0007399">
    <property type="term" value="P:nervous system development"/>
    <property type="evidence" value="ECO:0007669"/>
    <property type="project" value="UniProtKB-KW"/>
</dbReference>
<dbReference type="GO" id="GO:0006913">
    <property type="term" value="P:nucleocytoplasmic transport"/>
    <property type="evidence" value="ECO:0000266"/>
    <property type="project" value="RGD"/>
</dbReference>
<dbReference type="GO" id="GO:0060999">
    <property type="term" value="P:positive regulation of dendritic spine development"/>
    <property type="evidence" value="ECO:0000250"/>
    <property type="project" value="UniProtKB"/>
</dbReference>
<dbReference type="GO" id="GO:0051149">
    <property type="term" value="P:positive regulation of muscle cell differentiation"/>
    <property type="evidence" value="ECO:0000266"/>
    <property type="project" value="RGD"/>
</dbReference>
<dbReference type="GO" id="GO:0010976">
    <property type="term" value="P:positive regulation of neuron projection development"/>
    <property type="evidence" value="ECO:0000250"/>
    <property type="project" value="UniProtKB"/>
</dbReference>
<dbReference type="GO" id="GO:0046827">
    <property type="term" value="P:positive regulation of protein export from nucleus"/>
    <property type="evidence" value="ECO:0000266"/>
    <property type="project" value="RGD"/>
</dbReference>
<dbReference type="GO" id="GO:0071902">
    <property type="term" value="P:positive regulation of protein serine/threonine kinase activity"/>
    <property type="evidence" value="ECO:0000250"/>
    <property type="project" value="UniProtKB"/>
</dbReference>
<dbReference type="GO" id="GO:0051835">
    <property type="term" value="P:positive regulation of synapse structural plasticity"/>
    <property type="evidence" value="ECO:0000250"/>
    <property type="project" value="UniProtKB"/>
</dbReference>
<dbReference type="GO" id="GO:0060143">
    <property type="term" value="P:positive regulation of syncytium formation by plasma membrane fusion"/>
    <property type="evidence" value="ECO:0000266"/>
    <property type="project" value="RGD"/>
</dbReference>
<dbReference type="GO" id="GO:0045944">
    <property type="term" value="P:positive regulation of transcription by RNA polymerase II"/>
    <property type="evidence" value="ECO:0000266"/>
    <property type="project" value="RGD"/>
</dbReference>
<dbReference type="GO" id="GO:0006468">
    <property type="term" value="P:protein phosphorylation"/>
    <property type="evidence" value="ECO:0000250"/>
    <property type="project" value="UniProtKB"/>
</dbReference>
<dbReference type="GO" id="GO:0051147">
    <property type="term" value="P:regulation of muscle cell differentiation"/>
    <property type="evidence" value="ECO:0000250"/>
    <property type="project" value="UniProtKB"/>
</dbReference>
<dbReference type="GO" id="GO:0043393">
    <property type="term" value="P:regulation of protein binding"/>
    <property type="evidence" value="ECO:0000250"/>
    <property type="project" value="UniProtKB"/>
</dbReference>
<dbReference type="GO" id="GO:0032880">
    <property type="term" value="P:regulation of protein localization"/>
    <property type="evidence" value="ECO:0000250"/>
    <property type="project" value="UniProtKB"/>
</dbReference>
<dbReference type="GO" id="GO:0050807">
    <property type="term" value="P:regulation of synapse organization"/>
    <property type="evidence" value="ECO:0000314"/>
    <property type="project" value="SynGO"/>
</dbReference>
<dbReference type="GO" id="GO:0007165">
    <property type="term" value="P:signal transduction"/>
    <property type="evidence" value="ECO:0000266"/>
    <property type="project" value="RGD"/>
</dbReference>
<dbReference type="CDD" id="cd14167">
    <property type="entry name" value="STKc_CaMKI_alpha"/>
    <property type="match status" value="1"/>
</dbReference>
<dbReference type="DisProt" id="DP01958"/>
<dbReference type="FunFam" id="1.10.510.10:FF:000026">
    <property type="entry name" value="Calcium/calmodulin-dependent protein kinase type 1"/>
    <property type="match status" value="1"/>
</dbReference>
<dbReference type="FunFam" id="3.30.200.20:FF:000203">
    <property type="entry name" value="Calcium/calmodulin-dependent protein kinase type 1"/>
    <property type="match status" value="1"/>
</dbReference>
<dbReference type="Gene3D" id="3.30.200.20">
    <property type="entry name" value="Phosphorylase Kinase, domain 1"/>
    <property type="match status" value="1"/>
</dbReference>
<dbReference type="Gene3D" id="1.10.510.10">
    <property type="entry name" value="Transferase(Phosphotransferase) domain 1"/>
    <property type="match status" value="1"/>
</dbReference>
<dbReference type="IDEAL" id="IID50054"/>
<dbReference type="InterPro" id="IPR011009">
    <property type="entry name" value="Kinase-like_dom_sf"/>
</dbReference>
<dbReference type="InterPro" id="IPR000719">
    <property type="entry name" value="Prot_kinase_dom"/>
</dbReference>
<dbReference type="InterPro" id="IPR017441">
    <property type="entry name" value="Protein_kinase_ATP_BS"/>
</dbReference>
<dbReference type="InterPro" id="IPR008271">
    <property type="entry name" value="Ser/Thr_kinase_AS"/>
</dbReference>
<dbReference type="PANTHER" id="PTHR24347">
    <property type="entry name" value="SERINE/THREONINE-PROTEIN KINASE"/>
    <property type="match status" value="1"/>
</dbReference>
<dbReference type="Pfam" id="PF00069">
    <property type="entry name" value="Pkinase"/>
    <property type="match status" value="1"/>
</dbReference>
<dbReference type="SMART" id="SM00220">
    <property type="entry name" value="S_TKc"/>
    <property type="match status" value="1"/>
</dbReference>
<dbReference type="SUPFAM" id="SSF56112">
    <property type="entry name" value="Protein kinase-like (PK-like)"/>
    <property type="match status" value="1"/>
</dbReference>
<dbReference type="PROSITE" id="PS00107">
    <property type="entry name" value="PROTEIN_KINASE_ATP"/>
    <property type="match status" value="1"/>
</dbReference>
<dbReference type="PROSITE" id="PS50011">
    <property type="entry name" value="PROTEIN_KINASE_DOM"/>
    <property type="match status" value="1"/>
</dbReference>
<dbReference type="PROSITE" id="PS00108">
    <property type="entry name" value="PROTEIN_KINASE_ST"/>
    <property type="match status" value="1"/>
</dbReference>
<feature type="chain" id="PRO_0000086078" description="Calcium/calmodulin-dependent protein kinase type 1">
    <location>
        <begin position="1"/>
        <end position="374"/>
    </location>
</feature>
<feature type="domain" description="Protein kinase" evidence="3">
    <location>
        <begin position="20"/>
        <end position="276"/>
    </location>
</feature>
<feature type="region of interest" description="Autoinhibitory domain" evidence="14 19">
    <location>
        <begin position="276"/>
        <end position="316"/>
    </location>
</feature>
<feature type="region of interest" description="Calmodulin-binding" evidence="5 20 21">
    <location>
        <begin position="296"/>
        <end position="317"/>
    </location>
</feature>
<feature type="short sequence motif" description="Involved in nuclear import" evidence="18">
    <location>
        <begin position="263"/>
        <end position="264"/>
    </location>
</feature>
<feature type="short sequence motif" description="Nuclear export signal">
    <location>
        <begin position="315"/>
        <end position="321"/>
    </location>
</feature>
<feature type="active site" description="Proton acceptor">
    <location>
        <position position="141"/>
    </location>
</feature>
<feature type="binding site" evidence="3">
    <location>
        <begin position="26"/>
        <end position="34"/>
    </location>
    <ligand>
        <name>ATP</name>
        <dbReference type="ChEBI" id="CHEBI:30616"/>
    </ligand>
</feature>
<feature type="binding site" evidence="3">
    <location>
        <position position="49"/>
    </location>
    <ligand>
        <name>ATP</name>
        <dbReference type="ChEBI" id="CHEBI:30616"/>
    </ligand>
</feature>
<feature type="modified residue" description="Phosphothreonine; by CaMKK1 and CaMKK2" evidence="16">
    <location>
        <position position="177"/>
    </location>
</feature>
<feature type="cross-link" description="Glycyl lysine isopeptide (Lys-Gly) (interchain with G-Cter in ubiquitin)" evidence="2">
    <location>
        <position position="59"/>
    </location>
</feature>
<feature type="mutagenesis site" description="Loss of activation by CaMKK1 and CaMKK2." evidence="16">
    <original>T</original>
    <variation>A</variation>
    <location>
        <position position="177"/>
    </location>
</feature>
<feature type="mutagenesis site" description="Partially excluded from the nucleus; when associated with 319-AQA-321." evidence="7">
    <original>KR</original>
    <variation>AA</variation>
    <location>
        <begin position="263"/>
        <end position="264"/>
    </location>
</feature>
<feature type="mutagenesis site" description="Retention in the nucleus. Partially excluded from the nucleus; when associated with 263-AA-264." evidence="7">
    <original>LQL</original>
    <variation>AQA</variation>
    <location>
        <begin position="319"/>
        <end position="321"/>
    </location>
</feature>
<feature type="sequence conflict" description="In Ref. 5; AA sequence." evidence="18" ref="5">
    <original>A</original>
    <variation>T</variation>
    <location>
        <position position="37"/>
    </location>
</feature>
<feature type="sequence conflict" description="In Ref. 1; AAA19670." evidence="18" ref="1">
    <original>F</original>
    <variation>G</variation>
    <location>
        <position position="112"/>
    </location>
</feature>
<feature type="sequence conflict" description="In Ref. 1; AAA19670." evidence="18" ref="1">
    <original>A</original>
    <variation>R</variation>
    <location>
        <position position="118"/>
    </location>
</feature>
<feature type="sequence conflict" description="In Ref. 5; AA sequence." evidence="18" ref="5">
    <original>S</original>
    <variation>V</variation>
    <location>
        <position position="239"/>
    </location>
</feature>
<feature type="sequence conflict" description="In Ref. 1; AAA19670." evidence="18" ref="1">
    <original>A</original>
    <variation>R</variation>
    <location>
        <position position="309"/>
    </location>
</feature>
<feature type="helix" evidence="22">
    <location>
        <begin position="16"/>
        <end position="18"/>
    </location>
</feature>
<feature type="strand" evidence="22">
    <location>
        <begin position="20"/>
        <end position="28"/>
    </location>
</feature>
<feature type="helix" evidence="22">
    <location>
        <begin position="29"/>
        <end position="33"/>
    </location>
</feature>
<feature type="strand" evidence="22">
    <location>
        <begin position="34"/>
        <end position="39"/>
    </location>
</feature>
<feature type="turn" evidence="22">
    <location>
        <begin position="40"/>
        <end position="42"/>
    </location>
</feature>
<feature type="strand" evidence="22">
    <location>
        <begin position="45"/>
        <end position="52"/>
    </location>
</feature>
<feature type="helix" evidence="22">
    <location>
        <begin position="65"/>
        <end position="71"/>
    </location>
</feature>
<feature type="strand" evidence="22">
    <location>
        <begin position="81"/>
        <end position="86"/>
    </location>
</feature>
<feature type="strand" evidence="22">
    <location>
        <begin position="88"/>
        <end position="95"/>
    </location>
</feature>
<feature type="helix" evidence="22">
    <location>
        <begin position="103"/>
        <end position="108"/>
    </location>
</feature>
<feature type="helix" evidence="22">
    <location>
        <begin position="115"/>
        <end position="134"/>
    </location>
</feature>
<feature type="helix" evidence="22">
    <location>
        <begin position="144"/>
        <end position="146"/>
    </location>
</feature>
<feature type="strand" evidence="22">
    <location>
        <begin position="147"/>
        <end position="153"/>
    </location>
</feature>
<feature type="strand" evidence="22">
    <location>
        <begin position="158"/>
        <end position="160"/>
    </location>
</feature>
<feature type="helix" evidence="22">
    <location>
        <begin position="187"/>
        <end position="190"/>
    </location>
</feature>
<feature type="helix" evidence="22">
    <location>
        <begin position="198"/>
        <end position="213"/>
    </location>
</feature>
<feature type="helix" evidence="22">
    <location>
        <begin position="223"/>
        <end position="231"/>
    </location>
</feature>
<feature type="turn" evidence="22">
    <location>
        <begin position="239"/>
        <end position="244"/>
    </location>
</feature>
<feature type="helix" evidence="22">
    <location>
        <begin position="247"/>
        <end position="256"/>
    </location>
</feature>
<feature type="helix" evidence="22">
    <location>
        <begin position="261"/>
        <end position="263"/>
    </location>
</feature>
<feature type="helix" evidence="22">
    <location>
        <begin position="267"/>
        <end position="272"/>
    </location>
</feature>
<feature type="turn" evidence="22">
    <location>
        <begin position="274"/>
        <end position="276"/>
    </location>
</feature>
<feature type="strand" evidence="22">
    <location>
        <begin position="277"/>
        <end position="279"/>
    </location>
</feature>
<feature type="helix" evidence="22">
    <location>
        <begin position="287"/>
        <end position="297"/>
    </location>
</feature>
<feature type="helix" evidence="23">
    <location>
        <begin position="298"/>
        <end position="317"/>
    </location>
</feature>
<name>KCC1A_RAT</name>
<proteinExistence type="evidence at protein level"/>
<evidence type="ECO:0000250" key="1"/>
<evidence type="ECO:0000250" key="2">
    <source>
        <dbReference type="UniProtKB" id="Q14012"/>
    </source>
</evidence>
<evidence type="ECO:0000255" key="3">
    <source>
        <dbReference type="PROSITE-ProRule" id="PRU00159"/>
    </source>
</evidence>
<evidence type="ECO:0000269" key="4">
    <source>
    </source>
</evidence>
<evidence type="ECO:0000269" key="5">
    <source>
    </source>
</evidence>
<evidence type="ECO:0000269" key="6">
    <source>
    </source>
</evidence>
<evidence type="ECO:0000269" key="7">
    <source>
    </source>
</evidence>
<evidence type="ECO:0000269" key="8">
    <source>
    </source>
</evidence>
<evidence type="ECO:0000269" key="9">
    <source>
    </source>
</evidence>
<evidence type="ECO:0000269" key="10">
    <source>
    </source>
</evidence>
<evidence type="ECO:0000269" key="11">
    <source>
    </source>
</evidence>
<evidence type="ECO:0000269" key="12">
    <source>
    </source>
</evidence>
<evidence type="ECO:0000269" key="13">
    <source>
    </source>
</evidence>
<evidence type="ECO:0000269" key="14">
    <source>
    </source>
</evidence>
<evidence type="ECO:0000269" key="15">
    <source>
    </source>
</evidence>
<evidence type="ECO:0000269" key="16">
    <source>
    </source>
</evidence>
<evidence type="ECO:0000269" key="17">
    <source>
    </source>
</evidence>
<evidence type="ECO:0000305" key="18"/>
<evidence type="ECO:0007744" key="19">
    <source>
        <dbReference type="PDB" id="1A06"/>
    </source>
</evidence>
<evidence type="ECO:0007744" key="20">
    <source>
        <dbReference type="PDB" id="1MXE"/>
    </source>
</evidence>
<evidence type="ECO:0007744" key="21">
    <source>
        <dbReference type="PDB" id="2L7L"/>
    </source>
</evidence>
<evidence type="ECO:0007829" key="22">
    <source>
        <dbReference type="PDB" id="1A06"/>
    </source>
</evidence>
<evidence type="ECO:0007829" key="23">
    <source>
        <dbReference type="PDB" id="1MXE"/>
    </source>
</evidence>
<accession>Q63450</accession>
<accession>Q63084</accession>